<dbReference type="EC" id="3.5.4.27" evidence="1"/>
<dbReference type="EMBL" id="CP000780">
    <property type="protein sequence ID" value="ABS55198.1"/>
    <property type="molecule type" value="Genomic_DNA"/>
</dbReference>
<dbReference type="RefSeq" id="WP_012106220.1">
    <property type="nucleotide sequence ID" value="NC_009712.1"/>
</dbReference>
<dbReference type="SMR" id="A7I637"/>
<dbReference type="STRING" id="456442.Mboo_0680"/>
<dbReference type="GeneID" id="5411392"/>
<dbReference type="KEGG" id="mbn:Mboo_0680"/>
<dbReference type="eggNOG" id="arCOG02675">
    <property type="taxonomic scope" value="Archaea"/>
</dbReference>
<dbReference type="HOGENOM" id="CLU_876031_0_0_2"/>
<dbReference type="OrthoDB" id="105468at2157"/>
<dbReference type="UniPathway" id="UPA00640">
    <property type="reaction ID" value="UER00694"/>
</dbReference>
<dbReference type="Proteomes" id="UP000002408">
    <property type="component" value="Chromosome"/>
</dbReference>
<dbReference type="GO" id="GO:0005737">
    <property type="term" value="C:cytoplasm"/>
    <property type="evidence" value="ECO:0007669"/>
    <property type="project" value="UniProtKB-SubCell"/>
</dbReference>
<dbReference type="GO" id="GO:0018759">
    <property type="term" value="F:methenyltetrahydromethanopterin cyclohydrolase activity"/>
    <property type="evidence" value="ECO:0007669"/>
    <property type="project" value="UniProtKB-UniRule"/>
</dbReference>
<dbReference type="GO" id="GO:0019386">
    <property type="term" value="P:methanogenesis, from carbon dioxide"/>
    <property type="evidence" value="ECO:0007669"/>
    <property type="project" value="UniProtKB-UniRule"/>
</dbReference>
<dbReference type="GO" id="GO:0006730">
    <property type="term" value="P:one-carbon metabolic process"/>
    <property type="evidence" value="ECO:0007669"/>
    <property type="project" value="UniProtKB-UniRule"/>
</dbReference>
<dbReference type="CDD" id="cd00545">
    <property type="entry name" value="MCH"/>
    <property type="match status" value="1"/>
</dbReference>
<dbReference type="Gene3D" id="3.10.340.11">
    <property type="entry name" value="Methenyltetrahydromethanopterin Cyclohydrolase, Chain A, domain 1"/>
    <property type="match status" value="1"/>
</dbReference>
<dbReference type="Gene3D" id="3.30.1030.10">
    <property type="entry name" value="Methenyltetrahydromethanopterin Cyclohydrolase, Chain A, domain 2"/>
    <property type="match status" value="1"/>
</dbReference>
<dbReference type="HAMAP" id="MF_00486">
    <property type="entry name" value="McH"/>
    <property type="match status" value="1"/>
</dbReference>
<dbReference type="InterPro" id="IPR003209">
    <property type="entry name" value="METHMP_CycHdrlase"/>
</dbReference>
<dbReference type="NCBIfam" id="TIGR03120">
    <property type="entry name" value="one_C_mch"/>
    <property type="match status" value="1"/>
</dbReference>
<dbReference type="Pfam" id="PF02289">
    <property type="entry name" value="MCH"/>
    <property type="match status" value="1"/>
</dbReference>
<dbReference type="SUPFAM" id="SSF56199">
    <property type="entry name" value="Methenyltetrahydromethanopterin cyclohydrolase"/>
    <property type="match status" value="1"/>
</dbReference>
<organism>
    <name type="scientific">Methanoregula boonei (strain DSM 21154 / JCM 14090 / 6A8)</name>
    <dbReference type="NCBI Taxonomy" id="456442"/>
    <lineage>
        <taxon>Archaea</taxon>
        <taxon>Methanobacteriati</taxon>
        <taxon>Methanobacteriota</taxon>
        <taxon>Stenosarchaea group</taxon>
        <taxon>Methanomicrobia</taxon>
        <taxon>Methanomicrobiales</taxon>
        <taxon>Methanoregulaceae</taxon>
        <taxon>Methanoregula</taxon>
    </lineage>
</organism>
<evidence type="ECO:0000255" key="1">
    <source>
        <dbReference type="HAMAP-Rule" id="MF_00486"/>
    </source>
</evidence>
<sequence>MLSVNELALEIFDNLADLAEEFNAVYHELDNGARIVDCGVSTRGGYAAGRAFTEICMGGLGEVNFRMGQIKEFPQPFIDVNTDFPSIACLGAQKAGWTVKVGNYFAMGSGPARALSLKPKHTYEVIDYEDDYDCAVICLESDHLPNAEVMNKIAEECHVDVANTCAVVAPTSSIVGSIQVSGRCVETAIYKLNELGFDTRKIASAIGTAPIPPVRGAKRAMGVTNDATIYHGQIQLTMNAPEIKDYLEKIPSSKSKGYGKPFNDIFKEAGYDFYKIDTSLFSPAEVIINELSDGSVYRVGAVNTDVTLKSFGLQ</sequence>
<name>MCH_METB6</name>
<keyword id="KW-0963">Cytoplasm</keyword>
<keyword id="KW-0378">Hydrolase</keyword>
<keyword id="KW-0484">Methanogenesis</keyword>
<keyword id="KW-0554">One-carbon metabolism</keyword>
<keyword id="KW-1185">Reference proteome</keyword>
<reference key="1">
    <citation type="journal article" date="2015" name="Microbiology">
        <title>Genome of Methanoregula boonei 6A8 reveals adaptations to oligotrophic peatland environments.</title>
        <authorList>
            <person name="Braeuer S."/>
            <person name="Cadillo-Quiroz H."/>
            <person name="Kyrpides N."/>
            <person name="Woyke T."/>
            <person name="Goodwin L."/>
            <person name="Detter C."/>
            <person name="Podell S."/>
            <person name="Yavitt J.B."/>
            <person name="Zinder S.H."/>
        </authorList>
    </citation>
    <scope>NUCLEOTIDE SEQUENCE [LARGE SCALE GENOMIC DNA]</scope>
    <source>
        <strain>DSM 21154 / JCM 14090 / 6A8</strain>
    </source>
</reference>
<gene>
    <name evidence="1" type="primary">mch</name>
    <name type="ordered locus">Mboo_0680</name>
</gene>
<feature type="chain" id="PRO_1000081351" description="Methenyltetrahydromethanopterin cyclohydrolase">
    <location>
        <begin position="1"/>
        <end position="314"/>
    </location>
</feature>
<protein>
    <recommendedName>
        <fullName evidence="1">Methenyltetrahydromethanopterin cyclohydrolase</fullName>
        <ecNumber evidence="1">3.5.4.27</ecNumber>
    </recommendedName>
    <alternativeName>
        <fullName evidence="1">Methenyl-H4MPT cyclohydrolase</fullName>
    </alternativeName>
</protein>
<comment type="function">
    <text evidence="1">Catalyzes the reversible interconversion of 5-formyl-H(4)MPT to methenyl-H(4)MPT(+).</text>
</comment>
<comment type="catalytic activity">
    <reaction evidence="1">
        <text>5,10-methenyl-5,6,7,8-tetrahydromethanopterin + H2O = N(5)-formyl-5,6,7,8-tetrahydromethanopterin + H(+)</text>
        <dbReference type="Rhea" id="RHEA:19053"/>
        <dbReference type="ChEBI" id="CHEBI:15377"/>
        <dbReference type="ChEBI" id="CHEBI:15378"/>
        <dbReference type="ChEBI" id="CHEBI:58018"/>
        <dbReference type="ChEBI" id="CHEBI:58337"/>
        <dbReference type="EC" id="3.5.4.27"/>
    </reaction>
</comment>
<comment type="pathway">
    <text evidence="1">One-carbon metabolism; methanogenesis from CO(2); 5,10-methenyl-5,6,7,8-tetrahydromethanopterin from CO(2): step 3/3.</text>
</comment>
<comment type="subcellular location">
    <subcellularLocation>
        <location evidence="1">Cytoplasm</location>
    </subcellularLocation>
</comment>
<comment type="similarity">
    <text evidence="1">Belongs to the MCH family.</text>
</comment>
<proteinExistence type="inferred from homology"/>
<accession>A7I637</accession>